<sequence length="207" mass="22530">MPKVTVYNQTGSQVGEIELAEAIFGIEPNEAVLFEAVMMQRASLRQGTHKVKTRSEVRGGGRKPWRQKGTGRARQGSIRSPQWRGGGTVFGPTPRSYAYKLPKKVRRLAIKSALATKVVENNIVVLEDLVLNAPKTKDMLAVLKGLTVEKKALIVTADANESVELSARNIPGVTVITADGVNVLDVLHHDKLIMTKAAVEKVEEVLA</sequence>
<organism>
    <name type="scientific">Bacillus cereus (strain G9842)</name>
    <dbReference type="NCBI Taxonomy" id="405531"/>
    <lineage>
        <taxon>Bacteria</taxon>
        <taxon>Bacillati</taxon>
        <taxon>Bacillota</taxon>
        <taxon>Bacilli</taxon>
        <taxon>Bacillales</taxon>
        <taxon>Bacillaceae</taxon>
        <taxon>Bacillus</taxon>
        <taxon>Bacillus cereus group</taxon>
    </lineage>
</organism>
<feature type="chain" id="PRO_1000142078" description="Large ribosomal subunit protein uL4">
    <location>
        <begin position="1"/>
        <end position="207"/>
    </location>
</feature>
<feature type="region of interest" description="Disordered" evidence="2">
    <location>
        <begin position="45"/>
        <end position="89"/>
    </location>
</feature>
<feature type="compositionally biased region" description="Basic residues" evidence="2">
    <location>
        <begin position="60"/>
        <end position="71"/>
    </location>
</feature>
<gene>
    <name evidence="1" type="primary">rplD</name>
    <name type="ordered locus">BCG9842_B5194</name>
</gene>
<accession>B7IT20</accession>
<keyword id="KW-0687">Ribonucleoprotein</keyword>
<keyword id="KW-0689">Ribosomal protein</keyword>
<keyword id="KW-0694">RNA-binding</keyword>
<keyword id="KW-0699">rRNA-binding</keyword>
<comment type="function">
    <text evidence="1">One of the primary rRNA binding proteins, this protein initially binds near the 5'-end of the 23S rRNA. It is important during the early stages of 50S assembly. It makes multiple contacts with different domains of the 23S rRNA in the assembled 50S subunit and ribosome.</text>
</comment>
<comment type="function">
    <text evidence="1">Forms part of the polypeptide exit tunnel.</text>
</comment>
<comment type="subunit">
    <text evidence="1">Part of the 50S ribosomal subunit.</text>
</comment>
<comment type="similarity">
    <text evidence="1">Belongs to the universal ribosomal protein uL4 family.</text>
</comment>
<dbReference type="EMBL" id="CP001186">
    <property type="protein sequence ID" value="ACK96308.1"/>
    <property type="molecule type" value="Genomic_DNA"/>
</dbReference>
<dbReference type="RefSeq" id="WP_001127258.1">
    <property type="nucleotide sequence ID" value="NC_011772.1"/>
</dbReference>
<dbReference type="SMR" id="B7IT20"/>
<dbReference type="GeneID" id="93010942"/>
<dbReference type="KEGG" id="bcg:BCG9842_B5194"/>
<dbReference type="HOGENOM" id="CLU_041575_5_2_9"/>
<dbReference type="Proteomes" id="UP000006744">
    <property type="component" value="Chromosome"/>
</dbReference>
<dbReference type="GO" id="GO:1990904">
    <property type="term" value="C:ribonucleoprotein complex"/>
    <property type="evidence" value="ECO:0007669"/>
    <property type="project" value="UniProtKB-KW"/>
</dbReference>
<dbReference type="GO" id="GO:0005840">
    <property type="term" value="C:ribosome"/>
    <property type="evidence" value="ECO:0007669"/>
    <property type="project" value="UniProtKB-KW"/>
</dbReference>
<dbReference type="GO" id="GO:0019843">
    <property type="term" value="F:rRNA binding"/>
    <property type="evidence" value="ECO:0007669"/>
    <property type="project" value="UniProtKB-UniRule"/>
</dbReference>
<dbReference type="GO" id="GO:0003735">
    <property type="term" value="F:structural constituent of ribosome"/>
    <property type="evidence" value="ECO:0007669"/>
    <property type="project" value="InterPro"/>
</dbReference>
<dbReference type="GO" id="GO:0006412">
    <property type="term" value="P:translation"/>
    <property type="evidence" value="ECO:0007669"/>
    <property type="project" value="UniProtKB-UniRule"/>
</dbReference>
<dbReference type="FunFam" id="3.40.1370.10:FF:000003">
    <property type="entry name" value="50S ribosomal protein L4"/>
    <property type="match status" value="1"/>
</dbReference>
<dbReference type="Gene3D" id="3.40.1370.10">
    <property type="match status" value="1"/>
</dbReference>
<dbReference type="HAMAP" id="MF_01328_B">
    <property type="entry name" value="Ribosomal_uL4_B"/>
    <property type="match status" value="1"/>
</dbReference>
<dbReference type="InterPro" id="IPR002136">
    <property type="entry name" value="Ribosomal_uL4"/>
</dbReference>
<dbReference type="InterPro" id="IPR013005">
    <property type="entry name" value="Ribosomal_uL4-like"/>
</dbReference>
<dbReference type="InterPro" id="IPR023574">
    <property type="entry name" value="Ribosomal_uL4_dom_sf"/>
</dbReference>
<dbReference type="NCBIfam" id="TIGR03953">
    <property type="entry name" value="rplD_bact"/>
    <property type="match status" value="1"/>
</dbReference>
<dbReference type="PANTHER" id="PTHR10746">
    <property type="entry name" value="50S RIBOSOMAL PROTEIN L4"/>
    <property type="match status" value="1"/>
</dbReference>
<dbReference type="PANTHER" id="PTHR10746:SF6">
    <property type="entry name" value="LARGE RIBOSOMAL SUBUNIT PROTEIN UL4M"/>
    <property type="match status" value="1"/>
</dbReference>
<dbReference type="Pfam" id="PF00573">
    <property type="entry name" value="Ribosomal_L4"/>
    <property type="match status" value="1"/>
</dbReference>
<dbReference type="SUPFAM" id="SSF52166">
    <property type="entry name" value="Ribosomal protein L4"/>
    <property type="match status" value="1"/>
</dbReference>
<protein>
    <recommendedName>
        <fullName evidence="1">Large ribosomal subunit protein uL4</fullName>
    </recommendedName>
    <alternativeName>
        <fullName evidence="3">50S ribosomal protein L4</fullName>
    </alternativeName>
</protein>
<evidence type="ECO:0000255" key="1">
    <source>
        <dbReference type="HAMAP-Rule" id="MF_01328"/>
    </source>
</evidence>
<evidence type="ECO:0000256" key="2">
    <source>
        <dbReference type="SAM" id="MobiDB-lite"/>
    </source>
</evidence>
<evidence type="ECO:0000305" key="3"/>
<proteinExistence type="inferred from homology"/>
<reference key="1">
    <citation type="submission" date="2008-10" db="EMBL/GenBank/DDBJ databases">
        <title>Genome sequence of Bacillus cereus G9842.</title>
        <authorList>
            <person name="Dodson R.J."/>
            <person name="Durkin A.S."/>
            <person name="Rosovitz M.J."/>
            <person name="Rasko D.A."/>
            <person name="Hoffmaster A."/>
            <person name="Ravel J."/>
            <person name="Sutton G."/>
        </authorList>
    </citation>
    <scope>NUCLEOTIDE SEQUENCE [LARGE SCALE GENOMIC DNA]</scope>
    <source>
        <strain>G9842</strain>
    </source>
</reference>
<name>RL4_BACC2</name>